<reference key="1">
    <citation type="journal article" date="1991" name="Arch. Biochem. Biophys.">
        <title>Complete amino acid sequence of the type III isozyme of rat hexokinase, deduced from the cloned cDNA.</title>
        <authorList>
            <person name="Schwab D.A."/>
            <person name="Wilson J.E."/>
        </authorList>
    </citation>
    <scope>NUCLEOTIDE SEQUENCE [MRNA]</scope>
    <source>
        <tissue>Liver</tissue>
    </source>
</reference>
<reference key="2">
    <citation type="submission" date="1996-10" db="EMBL/GenBank/DDBJ databases">
        <authorList>
            <person name="White J.A."/>
        </authorList>
    </citation>
    <scope>NUCLEOTIDE SEQUENCE [MRNA]</scope>
    <source>
        <tissue>Liver</tissue>
    </source>
</reference>
<reference key="3">
    <citation type="journal article" date="2004" name="Genome Res.">
        <title>The status, quality, and expansion of the NIH full-length cDNA project: the Mammalian Gene Collection (MGC).</title>
        <authorList>
            <consortium name="The MGC Project Team"/>
        </authorList>
    </citation>
    <scope>NUCLEOTIDE SEQUENCE [LARGE SCALE MRNA]</scope>
    <source>
        <tissue>Prostate</tissue>
    </source>
</reference>
<reference key="4">
    <citation type="journal article" date="1964" name="Biochem. Biophys. Res. Commun.">
        <title>Multiple molecular forms of ATP:hexose 6-phosphotransferase from rat liver.</title>
        <authorList>
            <person name="Gonzalez C."/>
            <person name="Ureta T."/>
            <person name="Sanchez R."/>
            <person name="Niemeyer H."/>
        </authorList>
    </citation>
    <scope>FUNCTION</scope>
    <scope>CATALYTIC ACTIVITY</scope>
    <scope>BIOPHYSICOCHEMICAL PROPERTIES</scope>
</reference>
<reference key="5">
    <citation type="journal article" date="1982" name="Comp. Biochem. Physiol.">
        <title>The comparative isozymology of vertebrate hexokinases.</title>
        <authorList>
            <person name="Ureta T."/>
        </authorList>
    </citation>
    <scope>REVIEW</scope>
</reference>
<evidence type="ECO:0000250" key="1">
    <source>
        <dbReference type="UniProtKB" id="P19367"/>
    </source>
</evidence>
<evidence type="ECO:0000250" key="2">
    <source>
        <dbReference type="UniProtKB" id="P52790"/>
    </source>
</evidence>
<evidence type="ECO:0000255" key="3">
    <source>
        <dbReference type="PROSITE-ProRule" id="PRU01084"/>
    </source>
</evidence>
<evidence type="ECO:0000256" key="4">
    <source>
        <dbReference type="SAM" id="MobiDB-lite"/>
    </source>
</evidence>
<evidence type="ECO:0000269" key="5">
    <source>
    </source>
</evidence>
<evidence type="ECO:0000303" key="6">
    <source>
    </source>
</evidence>
<evidence type="ECO:0000303" key="7">
    <source>
    </source>
</evidence>
<evidence type="ECO:0000305" key="8"/>
<evidence type="ECO:0000305" key="9">
    <source>
    </source>
</evidence>
<evidence type="ECO:0000312" key="10">
    <source>
        <dbReference type="RGD" id="2798"/>
    </source>
</evidence>
<name>HXK3_RAT</name>
<protein>
    <recommendedName>
        <fullName evidence="8">Hexokinase-3</fullName>
        <ecNumber evidence="5">2.7.1.1</ecNumber>
    </recommendedName>
    <alternativeName>
        <fullName evidence="6">Hexokinase type III</fullName>
        <shortName evidence="6">HK III</shortName>
    </alternativeName>
    <alternativeName>
        <fullName evidence="7">Hexokinase-C</fullName>
    </alternativeName>
</protein>
<comment type="function">
    <text evidence="5">Catalyzes the phosphorylation of hexose, such as D-glucose and D-fructose, to hexose 6-phosphate (D-glucose 6-phosphate and D-fructose 6-phosphate, respectively) (PubMed:5871820). Mediates the initial step of glycolysis by catalyzing phosphorylation of D-glucose to D-glucose 6-phosphate (PubMed:5871820).</text>
</comment>
<comment type="catalytic activity">
    <reaction evidence="5">
        <text>a D-hexose + ATP = a D-hexose 6-phosphate + ADP + H(+)</text>
        <dbReference type="Rhea" id="RHEA:22740"/>
        <dbReference type="ChEBI" id="CHEBI:4194"/>
        <dbReference type="ChEBI" id="CHEBI:15378"/>
        <dbReference type="ChEBI" id="CHEBI:30616"/>
        <dbReference type="ChEBI" id="CHEBI:229467"/>
        <dbReference type="ChEBI" id="CHEBI:456216"/>
        <dbReference type="EC" id="2.7.1.1"/>
    </reaction>
    <physiologicalReaction direction="left-to-right" evidence="5">
        <dbReference type="Rhea" id="RHEA:22741"/>
    </physiologicalReaction>
</comment>
<comment type="catalytic activity">
    <reaction evidence="5">
        <text>D-fructose + ATP = D-fructose 6-phosphate + ADP + H(+)</text>
        <dbReference type="Rhea" id="RHEA:16125"/>
        <dbReference type="ChEBI" id="CHEBI:15378"/>
        <dbReference type="ChEBI" id="CHEBI:30616"/>
        <dbReference type="ChEBI" id="CHEBI:37721"/>
        <dbReference type="ChEBI" id="CHEBI:61527"/>
        <dbReference type="ChEBI" id="CHEBI:456216"/>
        <dbReference type="EC" id="2.7.1.1"/>
    </reaction>
    <physiologicalReaction direction="left-to-right" evidence="5">
        <dbReference type="Rhea" id="RHEA:16126"/>
    </physiologicalReaction>
</comment>
<comment type="catalytic activity">
    <reaction evidence="5">
        <text>D-glucose + ATP = D-glucose 6-phosphate + ADP + H(+)</text>
        <dbReference type="Rhea" id="RHEA:17825"/>
        <dbReference type="ChEBI" id="CHEBI:4167"/>
        <dbReference type="ChEBI" id="CHEBI:15378"/>
        <dbReference type="ChEBI" id="CHEBI:30616"/>
        <dbReference type="ChEBI" id="CHEBI:61548"/>
        <dbReference type="ChEBI" id="CHEBI:456216"/>
        <dbReference type="EC" id="2.7.1.1"/>
    </reaction>
    <physiologicalReaction direction="left-to-right" evidence="5">
        <dbReference type="Rhea" id="RHEA:17826"/>
    </physiologicalReaction>
</comment>
<comment type="activity regulation">
    <text evidence="2">Hexokinase is an allosteric enzyme inhibited by its product D-glucose 6-phosphate.</text>
</comment>
<comment type="biophysicochemical properties">
    <kinetics>
        <KM evidence="5">6 uM for D-glucose</KM>
        <KM evidence="5">1.2 mM for D-fructose</KM>
    </kinetics>
</comment>
<comment type="pathway">
    <text evidence="9">Carbohydrate metabolism; hexose metabolism.</text>
</comment>
<comment type="pathway">
    <text evidence="9">Carbohydrate degradation; glycolysis; D-glyceraldehyde 3-phosphate and glycerone phosphate from D-glucose: step 1/4.</text>
</comment>
<comment type="domain">
    <text evidence="1">The N- and C-terminal halves of this hexokinase contain a hexokinase domain. The catalytic activity is associated with the C-terminus while regulatory function is associated with the N-terminus.</text>
</comment>
<comment type="similarity">
    <text evidence="3 8">Belongs to the hexokinase family.</text>
</comment>
<sequence>MAAIEPSGLHPGERDSSCPQEGIPRPSGSLELAQEYLQQFKVTMTQLQQIQASLLCSMEQALKGQDSPAPSVRMLPTYVRSTPHGTEQGDFLVLELGATGASLRVLWVTLTGTKEHSVETRSQEFVIPQEVILGAGQQLFDFAARCLSEFLDAYPVENQGLKLGFNFSFPCHQTGLDKSTLISWTKGFRCSGVEGQDVVQLLRDAIQRQGTYNIDVVAMVNDTVGTMMGCELGTRPCEVGLIVDTGTNACYMEEARHVAALDEDRGRTCVSIEWGSFYDEEALGPVLTTFDDALDHESLVPGAQRFEKMIGGLYLGELVRLVLVHLSQHGVLFGGCASPALLSQNSILLEHVAKMEDPATGIAHVHTVLQGLGLSPQASDAELVQRVCMAVCTRAAQLCASALAAVLSRLQHSREQQTLHVAVATGGRVFEWHPRFLCILKETVMLLAPECDVSFIPSVDGGGRGVAMVTAVAARLATHRRILEETLAPFQLSLEQLTAVQAQMREAMIRGLQGESSSLRMLPTYVRATPDGSERGDFLALDLGGTNFRVLLVRVAEGSVQITNQVYSIPEYVAQGSGQKLFDHIVDCIVDFQKRQGLSGQSLPLGFTFSFPCKQLGLDQGILLNWTKGFNASGCEGQDVVYLLREAIRRRQAVELNVVAIVNDTVGTMMSCGYDDPCCEMGLIVGTGTNACYMEELRNVASVPGDSGHMCINMEWGAFGDDGSLSMLGTCFDASVDQASINPGKQRFEKMISGMYLGEIVRHILLHLTSLGVLFRGQKTQCLQTRDIFKTKFLSEIESDSLALRQVRAILEDLGLTLTSDDALMVLEVCQAVSRRAAQLCGAGVAAVVEKIRENRGLQELTVSVGVDGTLYKLHPHFSRLVSVTVRKLAPQCTVTFLQSEDGSGKGAALVTRVACRLTQMACV</sequence>
<accession>P27926</accession>
<accession>Q497A1</accession>
<organism>
    <name type="scientific">Rattus norvegicus</name>
    <name type="common">Rat</name>
    <dbReference type="NCBI Taxonomy" id="10116"/>
    <lineage>
        <taxon>Eukaryota</taxon>
        <taxon>Metazoa</taxon>
        <taxon>Chordata</taxon>
        <taxon>Craniata</taxon>
        <taxon>Vertebrata</taxon>
        <taxon>Euteleostomi</taxon>
        <taxon>Mammalia</taxon>
        <taxon>Eutheria</taxon>
        <taxon>Euarchontoglires</taxon>
        <taxon>Glires</taxon>
        <taxon>Rodentia</taxon>
        <taxon>Myomorpha</taxon>
        <taxon>Muroidea</taxon>
        <taxon>Muridae</taxon>
        <taxon>Murinae</taxon>
        <taxon>Rattus</taxon>
    </lineage>
</organism>
<proteinExistence type="evidence at protein level"/>
<dbReference type="EC" id="2.7.1.1" evidence="5"/>
<dbReference type="EMBL" id="U73859">
    <property type="protein sequence ID" value="AAB18253.1"/>
    <property type="molecule type" value="mRNA"/>
</dbReference>
<dbReference type="EMBL" id="BC100648">
    <property type="protein sequence ID" value="AAI00649.1"/>
    <property type="molecule type" value="mRNA"/>
</dbReference>
<dbReference type="PIR" id="S13913">
    <property type="entry name" value="S13913"/>
</dbReference>
<dbReference type="RefSeq" id="NP_071515.1">
    <property type="nucleotide sequence ID" value="NM_022179.2"/>
</dbReference>
<dbReference type="RefSeq" id="XP_006253664.1">
    <property type="nucleotide sequence ID" value="XM_006253602.3"/>
</dbReference>
<dbReference type="RefSeq" id="XP_006253665.1">
    <property type="nucleotide sequence ID" value="XM_006253603.3"/>
</dbReference>
<dbReference type="RefSeq" id="XP_008769706.1">
    <property type="nucleotide sequence ID" value="XM_008771484.1"/>
</dbReference>
<dbReference type="SMR" id="P27926"/>
<dbReference type="BioGRID" id="247137">
    <property type="interactions" value="10"/>
</dbReference>
<dbReference type="FunCoup" id="P27926">
    <property type="interactions" value="250"/>
</dbReference>
<dbReference type="STRING" id="10116.ENSRNOP00000068888"/>
<dbReference type="ChEMBL" id="CHEMBL3632"/>
<dbReference type="iPTMnet" id="P27926"/>
<dbReference type="PhosphoSitePlus" id="P27926"/>
<dbReference type="jPOST" id="P27926"/>
<dbReference type="PaxDb" id="10116-ENSRNOP00000031587"/>
<dbReference type="GeneID" id="25060"/>
<dbReference type="KEGG" id="rno:25060"/>
<dbReference type="UCSC" id="RGD:2798">
    <property type="organism name" value="rat"/>
</dbReference>
<dbReference type="AGR" id="RGD:2798"/>
<dbReference type="CTD" id="3101"/>
<dbReference type="RGD" id="2798">
    <property type="gene designation" value="Hk3"/>
</dbReference>
<dbReference type="eggNOG" id="KOG1369">
    <property type="taxonomic scope" value="Eukaryota"/>
</dbReference>
<dbReference type="InParanoid" id="P27926"/>
<dbReference type="OrthoDB" id="37075at9989"/>
<dbReference type="PhylomeDB" id="P27926"/>
<dbReference type="TreeFam" id="TF314238"/>
<dbReference type="Reactome" id="R-RNO-6798695">
    <property type="pathway name" value="Neutrophil degranulation"/>
</dbReference>
<dbReference type="Reactome" id="R-RNO-70171">
    <property type="pathway name" value="Glycolysis"/>
</dbReference>
<dbReference type="SABIO-RK" id="P27926"/>
<dbReference type="UniPathway" id="UPA00109">
    <property type="reaction ID" value="UER00180"/>
</dbReference>
<dbReference type="UniPathway" id="UPA00242"/>
<dbReference type="PRO" id="PR:P27926"/>
<dbReference type="Proteomes" id="UP000002494">
    <property type="component" value="Unplaced"/>
</dbReference>
<dbReference type="GO" id="GO:0005829">
    <property type="term" value="C:cytosol"/>
    <property type="evidence" value="ECO:0000318"/>
    <property type="project" value="GO_Central"/>
</dbReference>
<dbReference type="GO" id="GO:0005739">
    <property type="term" value="C:mitochondrion"/>
    <property type="evidence" value="ECO:0000318"/>
    <property type="project" value="GO_Central"/>
</dbReference>
<dbReference type="GO" id="GO:0032991">
    <property type="term" value="C:protein-containing complex"/>
    <property type="evidence" value="ECO:0000314"/>
    <property type="project" value="RGD"/>
</dbReference>
<dbReference type="GO" id="GO:0005524">
    <property type="term" value="F:ATP binding"/>
    <property type="evidence" value="ECO:0007669"/>
    <property type="project" value="UniProtKB-KW"/>
</dbReference>
<dbReference type="GO" id="GO:0005536">
    <property type="term" value="F:D-glucose binding"/>
    <property type="evidence" value="ECO:0007669"/>
    <property type="project" value="InterPro"/>
</dbReference>
<dbReference type="GO" id="GO:0019899">
    <property type="term" value="F:enzyme binding"/>
    <property type="evidence" value="ECO:0000353"/>
    <property type="project" value="RGD"/>
</dbReference>
<dbReference type="GO" id="GO:0008865">
    <property type="term" value="F:fructokinase activity"/>
    <property type="evidence" value="ECO:0000314"/>
    <property type="project" value="UniProtKB"/>
</dbReference>
<dbReference type="GO" id="GO:0004340">
    <property type="term" value="F:glucokinase activity"/>
    <property type="evidence" value="ECO:0000314"/>
    <property type="project" value="UniProtKB"/>
</dbReference>
<dbReference type="GO" id="GO:0004396">
    <property type="term" value="F:hexokinase activity"/>
    <property type="evidence" value="ECO:0000314"/>
    <property type="project" value="RGD"/>
</dbReference>
<dbReference type="GO" id="GO:0042562">
    <property type="term" value="F:hormone binding"/>
    <property type="evidence" value="ECO:0000353"/>
    <property type="project" value="RGD"/>
</dbReference>
<dbReference type="GO" id="GO:0019158">
    <property type="term" value="F:mannokinase activity"/>
    <property type="evidence" value="ECO:0000318"/>
    <property type="project" value="GO_Central"/>
</dbReference>
<dbReference type="GO" id="GO:0006002">
    <property type="term" value="P:fructose 6-phosphate metabolic process"/>
    <property type="evidence" value="ECO:0000314"/>
    <property type="project" value="UniProtKB"/>
</dbReference>
<dbReference type="GO" id="GO:0051156">
    <property type="term" value="P:glucose 6-phosphate metabolic process"/>
    <property type="evidence" value="ECO:0000314"/>
    <property type="project" value="UniProtKB"/>
</dbReference>
<dbReference type="GO" id="GO:0006006">
    <property type="term" value="P:glucose metabolic process"/>
    <property type="evidence" value="ECO:0000318"/>
    <property type="project" value="GO_Central"/>
</dbReference>
<dbReference type="GO" id="GO:0006096">
    <property type="term" value="P:glycolytic process"/>
    <property type="evidence" value="ECO:0000318"/>
    <property type="project" value="GO_Central"/>
</dbReference>
<dbReference type="GO" id="GO:0001678">
    <property type="term" value="P:intracellular glucose homeostasis"/>
    <property type="evidence" value="ECO:0000318"/>
    <property type="project" value="GO_Central"/>
</dbReference>
<dbReference type="GO" id="GO:1901299">
    <property type="term" value="P:negative regulation of hydrogen peroxide-mediated programmed cell death"/>
    <property type="evidence" value="ECO:0000314"/>
    <property type="project" value="CACAO"/>
</dbReference>
<dbReference type="FunFam" id="3.30.420.40:FF:000015">
    <property type="entry name" value="Hexokinase 1"/>
    <property type="match status" value="1"/>
</dbReference>
<dbReference type="FunFam" id="3.40.367.20:FF:000001">
    <property type="entry name" value="Hexokinase 1"/>
    <property type="match status" value="1"/>
</dbReference>
<dbReference type="FunFam" id="3.30.420.40:FF:000123">
    <property type="entry name" value="Hexokinase 3"/>
    <property type="match status" value="1"/>
</dbReference>
<dbReference type="FunFam" id="3.40.367.20:FF:000005">
    <property type="entry name" value="Phosphotransferase"/>
    <property type="match status" value="1"/>
</dbReference>
<dbReference type="Gene3D" id="3.30.420.40">
    <property type="match status" value="2"/>
</dbReference>
<dbReference type="Gene3D" id="3.40.367.20">
    <property type="match status" value="2"/>
</dbReference>
<dbReference type="InterPro" id="IPR043129">
    <property type="entry name" value="ATPase_NBD"/>
</dbReference>
<dbReference type="InterPro" id="IPR001312">
    <property type="entry name" value="Hexokinase"/>
</dbReference>
<dbReference type="InterPro" id="IPR019807">
    <property type="entry name" value="Hexokinase_BS"/>
</dbReference>
<dbReference type="InterPro" id="IPR022673">
    <property type="entry name" value="Hexokinase_C"/>
</dbReference>
<dbReference type="InterPro" id="IPR022672">
    <property type="entry name" value="Hexokinase_N"/>
</dbReference>
<dbReference type="PANTHER" id="PTHR19443">
    <property type="entry name" value="HEXOKINASE"/>
    <property type="match status" value="1"/>
</dbReference>
<dbReference type="PANTHER" id="PTHR19443:SF1">
    <property type="entry name" value="HEXOKINASE-3"/>
    <property type="match status" value="1"/>
</dbReference>
<dbReference type="Pfam" id="PF00349">
    <property type="entry name" value="Hexokinase_1"/>
    <property type="match status" value="2"/>
</dbReference>
<dbReference type="Pfam" id="PF03727">
    <property type="entry name" value="Hexokinase_2"/>
    <property type="match status" value="2"/>
</dbReference>
<dbReference type="PRINTS" id="PR00475">
    <property type="entry name" value="HEXOKINASE"/>
</dbReference>
<dbReference type="SUPFAM" id="SSF53067">
    <property type="entry name" value="Actin-like ATPase domain"/>
    <property type="match status" value="4"/>
</dbReference>
<dbReference type="PROSITE" id="PS00378">
    <property type="entry name" value="HEXOKINASE_1"/>
    <property type="match status" value="2"/>
</dbReference>
<dbReference type="PROSITE" id="PS51748">
    <property type="entry name" value="HEXOKINASE_2"/>
    <property type="match status" value="2"/>
</dbReference>
<gene>
    <name evidence="10" type="primary">Hk3</name>
</gene>
<keyword id="KW-0021">Allosteric enzyme</keyword>
<keyword id="KW-0067">ATP-binding</keyword>
<keyword id="KW-0324">Glycolysis</keyword>
<keyword id="KW-0418">Kinase</keyword>
<keyword id="KW-0547">Nucleotide-binding</keyword>
<keyword id="KW-1185">Reference proteome</keyword>
<keyword id="KW-0677">Repeat</keyword>
<keyword id="KW-0808">Transferase</keyword>
<feature type="chain" id="PRO_0000197592" description="Hexokinase-3">
    <location>
        <begin position="1"/>
        <end position="924"/>
    </location>
</feature>
<feature type="domain" description="Hexokinase 1" evidence="3">
    <location>
        <begin position="27"/>
        <end position="471"/>
    </location>
</feature>
<feature type="domain" description="Hexokinase 2" evidence="3">
    <location>
        <begin position="477"/>
        <end position="913"/>
    </location>
</feature>
<feature type="region of interest" description="Disordered" evidence="4">
    <location>
        <begin position="1"/>
        <end position="27"/>
    </location>
</feature>
<feature type="region of interest" description="Hexokinase small subdomain 1" evidence="3">
    <location>
        <begin position="84"/>
        <end position="220"/>
    </location>
</feature>
<feature type="region of interest" description="Hexokinase large subdomain 1" evidence="3">
    <location>
        <begin position="221"/>
        <end position="460"/>
    </location>
</feature>
<feature type="region of interest" description="Hexokinase small subdomain 2" evidence="3">
    <location>
        <begin position="531"/>
        <end position="662"/>
    </location>
</feature>
<feature type="region of interest" description="Hexokinase large subdomain 2" evidence="3">
    <location>
        <begin position="663"/>
        <end position="902"/>
    </location>
</feature>
<feature type="binding site" evidence="1">
    <location>
        <begin position="95"/>
        <end position="104"/>
    </location>
    <ligand>
        <name>D-glucose 6-phosphate</name>
        <dbReference type="ChEBI" id="CHEBI:61548"/>
        <label>1</label>
    </ligand>
</feature>
<feature type="binding site" evidence="1">
    <location>
        <begin position="95"/>
        <end position="102"/>
    </location>
    <ligand>
        <name>ATP</name>
        <dbReference type="ChEBI" id="CHEBI:30616"/>
        <label>1</label>
    </ligand>
</feature>
<feature type="binding site" evidence="1">
    <location>
        <position position="168"/>
    </location>
    <ligand>
        <name>D-glucose</name>
        <dbReference type="ChEBI" id="CHEBI:4167"/>
        <label>1</label>
    </ligand>
</feature>
<feature type="binding site" evidence="1">
    <location>
        <begin position="185"/>
        <end position="186"/>
    </location>
    <ligand>
        <name>D-glucose</name>
        <dbReference type="ChEBI" id="CHEBI:4167"/>
        <label>1</label>
    </ligand>
</feature>
<feature type="binding site" evidence="1">
    <location>
        <begin position="221"/>
        <end position="222"/>
    </location>
    <ligand>
        <name>D-glucose</name>
        <dbReference type="ChEBI" id="CHEBI:4167"/>
        <label>1</label>
    </ligand>
</feature>
<feature type="binding site" evidence="1">
    <location>
        <position position="222"/>
    </location>
    <ligand>
        <name>D-glucose 6-phosphate</name>
        <dbReference type="ChEBI" id="CHEBI:61548"/>
        <label>1</label>
    </ligand>
</feature>
<feature type="binding site" evidence="1">
    <location>
        <position position="245"/>
    </location>
    <ligand>
        <name>D-glucose 6-phosphate</name>
        <dbReference type="ChEBI" id="CHEBI:61548"/>
        <label>1</label>
    </ligand>
</feature>
<feature type="binding site" evidence="1">
    <location>
        <position position="248"/>
    </location>
    <ligand>
        <name>D-glucose</name>
        <dbReference type="ChEBI" id="CHEBI:4167"/>
        <label>1</label>
    </ligand>
</feature>
<feature type="binding site" evidence="1">
    <location>
        <position position="273"/>
    </location>
    <ligand>
        <name>D-glucose</name>
        <dbReference type="ChEBI" id="CHEBI:4167"/>
        <label>1</label>
    </ligand>
</feature>
<feature type="binding site" evidence="1">
    <location>
        <begin position="304"/>
        <end position="307"/>
    </location>
    <ligand>
        <name>D-glucose</name>
        <dbReference type="ChEBI" id="CHEBI:4167"/>
        <label>1</label>
    </ligand>
</feature>
<feature type="binding site" evidence="1">
    <location>
        <begin position="426"/>
        <end position="428"/>
    </location>
    <ligand>
        <name>D-glucose 6-phosphate</name>
        <dbReference type="ChEBI" id="CHEBI:61548"/>
        <label>1</label>
    </ligand>
</feature>
<feature type="binding site" evidence="1">
    <location>
        <begin position="438"/>
        <end position="439"/>
    </location>
    <ligand>
        <name>ATP</name>
        <dbReference type="ChEBI" id="CHEBI:30616"/>
        <label>1</label>
    </ligand>
</feature>
<feature type="binding site" evidence="1">
    <location>
        <begin position="542"/>
        <end position="547"/>
    </location>
    <ligand>
        <name>ATP</name>
        <dbReference type="ChEBI" id="CHEBI:30616"/>
        <label>2</label>
    </ligand>
</feature>
<feature type="binding site" evidence="1">
    <location>
        <begin position="542"/>
        <end position="546"/>
    </location>
    <ligand>
        <name>D-glucose 6-phosphate</name>
        <dbReference type="ChEBI" id="CHEBI:61548"/>
        <label>2</label>
    </ligand>
</feature>
<feature type="binding site" evidence="1">
    <location>
        <begin position="610"/>
        <end position="611"/>
    </location>
    <ligand>
        <name>D-glucose</name>
        <dbReference type="ChEBI" id="CHEBI:4167"/>
        <label>2</label>
    </ligand>
</feature>
<feature type="binding site" evidence="2">
    <location>
        <begin position="627"/>
        <end position="628"/>
    </location>
    <ligand>
        <name>D-glucose</name>
        <dbReference type="ChEBI" id="CHEBI:4167"/>
        <label>2</label>
    </ligand>
</feature>
<feature type="binding site" evidence="2">
    <location>
        <begin position="663"/>
        <end position="664"/>
    </location>
    <ligand>
        <name>D-glucose</name>
        <dbReference type="ChEBI" id="CHEBI:4167"/>
        <label>2</label>
    </ligand>
</feature>
<feature type="binding site" evidence="1">
    <location>
        <position position="664"/>
    </location>
    <ligand>
        <name>D-glucose 6-phosphate</name>
        <dbReference type="ChEBI" id="CHEBI:61548"/>
        <label>2</label>
    </ligand>
</feature>
<feature type="binding site" evidence="1">
    <location>
        <position position="687"/>
    </location>
    <ligand>
        <name>ATP</name>
        <dbReference type="ChEBI" id="CHEBI:30616"/>
        <label>2</label>
    </ligand>
</feature>
<feature type="binding site" evidence="1">
    <location>
        <position position="687"/>
    </location>
    <ligand>
        <name>D-glucose 6-phosphate</name>
        <dbReference type="ChEBI" id="CHEBI:61548"/>
        <label>2</label>
    </ligand>
</feature>
<feature type="binding site" evidence="2">
    <location>
        <begin position="689"/>
        <end position="690"/>
    </location>
    <ligand>
        <name>D-glucose</name>
        <dbReference type="ChEBI" id="CHEBI:4167"/>
        <label>2</label>
    </ligand>
</feature>
<feature type="binding site" evidence="2">
    <location>
        <position position="715"/>
    </location>
    <ligand>
        <name>D-glucose</name>
        <dbReference type="ChEBI" id="CHEBI:4167"/>
        <label>2</label>
    </ligand>
</feature>
<feature type="binding site" evidence="2">
    <location>
        <position position="749"/>
    </location>
    <ligand>
        <name>D-glucose</name>
        <dbReference type="ChEBI" id="CHEBI:4167"/>
        <label>2</label>
    </ligand>
</feature>
<feature type="binding site" evidence="1">
    <location>
        <begin position="754"/>
        <end position="755"/>
    </location>
    <ligand>
        <name>ATP</name>
        <dbReference type="ChEBI" id="CHEBI:30616"/>
        <label>2</label>
    </ligand>
</feature>
<feature type="binding site" evidence="1">
    <location>
        <begin position="791"/>
        <end position="795"/>
    </location>
    <ligand>
        <name>ATP</name>
        <dbReference type="ChEBI" id="CHEBI:30616"/>
        <label>2</label>
    </ligand>
</feature>
<feature type="binding site" evidence="1">
    <location>
        <begin position="868"/>
        <end position="870"/>
    </location>
    <ligand>
        <name>D-glucose 6-phosphate</name>
        <dbReference type="ChEBI" id="CHEBI:61548"/>
        <label>2</label>
    </ligand>
</feature>
<feature type="binding site" evidence="1">
    <location>
        <begin position="870"/>
        <end position="874"/>
    </location>
    <ligand>
        <name>ATP</name>
        <dbReference type="ChEBI" id="CHEBI:30616"/>
        <label>2</label>
    </ligand>
</feature>
<feature type="binding site" evidence="1">
    <location>
        <position position="904"/>
    </location>
    <ligand>
        <name>D-glucose 6-phosphate</name>
        <dbReference type="ChEBI" id="CHEBI:61548"/>
        <label>2</label>
    </ligand>
</feature>
<feature type="sequence conflict" description="In Ref. 3; AAI00649." evidence="8" ref="3">
    <original>R</original>
    <variation>A</variation>
    <location>
        <position position="913"/>
    </location>
</feature>